<feature type="chain" id="PRO_0000302327" description="Large ribosomal subunit protein bL36">
    <location>
        <begin position="1"/>
        <end position="37"/>
    </location>
</feature>
<protein>
    <recommendedName>
        <fullName evidence="1">Large ribosomal subunit protein bL36</fullName>
    </recommendedName>
    <alternativeName>
        <fullName evidence="2">50S ribosomal protein L36</fullName>
    </alternativeName>
</protein>
<gene>
    <name evidence="1" type="primary">rpmJ</name>
    <name type="ordered locus">Suden_0323</name>
</gene>
<dbReference type="EMBL" id="CP000153">
    <property type="protein sequence ID" value="ABB43604.1"/>
    <property type="molecule type" value="Genomic_DNA"/>
</dbReference>
<dbReference type="RefSeq" id="WP_011371958.1">
    <property type="nucleotide sequence ID" value="NC_007575.1"/>
</dbReference>
<dbReference type="SMR" id="Q30TS7"/>
<dbReference type="STRING" id="326298.Suden_0323"/>
<dbReference type="KEGG" id="tdn:Suden_0323"/>
<dbReference type="eggNOG" id="COG0257">
    <property type="taxonomic scope" value="Bacteria"/>
</dbReference>
<dbReference type="HOGENOM" id="CLU_135723_6_2_7"/>
<dbReference type="Proteomes" id="UP000002714">
    <property type="component" value="Chromosome"/>
</dbReference>
<dbReference type="GO" id="GO:0005737">
    <property type="term" value="C:cytoplasm"/>
    <property type="evidence" value="ECO:0007669"/>
    <property type="project" value="UniProtKB-ARBA"/>
</dbReference>
<dbReference type="GO" id="GO:1990904">
    <property type="term" value="C:ribonucleoprotein complex"/>
    <property type="evidence" value="ECO:0007669"/>
    <property type="project" value="UniProtKB-KW"/>
</dbReference>
<dbReference type="GO" id="GO:0005840">
    <property type="term" value="C:ribosome"/>
    <property type="evidence" value="ECO:0007669"/>
    <property type="project" value="UniProtKB-KW"/>
</dbReference>
<dbReference type="GO" id="GO:0003735">
    <property type="term" value="F:structural constituent of ribosome"/>
    <property type="evidence" value="ECO:0007669"/>
    <property type="project" value="InterPro"/>
</dbReference>
<dbReference type="GO" id="GO:0006412">
    <property type="term" value="P:translation"/>
    <property type="evidence" value="ECO:0007669"/>
    <property type="project" value="UniProtKB-UniRule"/>
</dbReference>
<dbReference type="HAMAP" id="MF_00251">
    <property type="entry name" value="Ribosomal_bL36"/>
    <property type="match status" value="1"/>
</dbReference>
<dbReference type="InterPro" id="IPR000473">
    <property type="entry name" value="Ribosomal_bL36"/>
</dbReference>
<dbReference type="InterPro" id="IPR035977">
    <property type="entry name" value="Ribosomal_bL36_sp"/>
</dbReference>
<dbReference type="NCBIfam" id="TIGR01022">
    <property type="entry name" value="rpmJ_bact"/>
    <property type="match status" value="1"/>
</dbReference>
<dbReference type="PANTHER" id="PTHR42888">
    <property type="entry name" value="50S RIBOSOMAL PROTEIN L36, CHLOROPLASTIC"/>
    <property type="match status" value="1"/>
</dbReference>
<dbReference type="PANTHER" id="PTHR42888:SF1">
    <property type="entry name" value="LARGE RIBOSOMAL SUBUNIT PROTEIN BL36C"/>
    <property type="match status" value="1"/>
</dbReference>
<dbReference type="Pfam" id="PF00444">
    <property type="entry name" value="Ribosomal_L36"/>
    <property type="match status" value="1"/>
</dbReference>
<dbReference type="SUPFAM" id="SSF57840">
    <property type="entry name" value="Ribosomal protein L36"/>
    <property type="match status" value="1"/>
</dbReference>
<dbReference type="PROSITE" id="PS00828">
    <property type="entry name" value="RIBOSOMAL_L36"/>
    <property type="match status" value="1"/>
</dbReference>
<comment type="similarity">
    <text evidence="1">Belongs to the bacterial ribosomal protein bL36 family.</text>
</comment>
<organism>
    <name type="scientific">Sulfurimonas denitrificans (strain ATCC 33889 / DSM 1251)</name>
    <name type="common">Thiomicrospira denitrificans (strain ATCC 33889 / DSM 1251)</name>
    <dbReference type="NCBI Taxonomy" id="326298"/>
    <lineage>
        <taxon>Bacteria</taxon>
        <taxon>Pseudomonadati</taxon>
        <taxon>Campylobacterota</taxon>
        <taxon>Epsilonproteobacteria</taxon>
        <taxon>Campylobacterales</taxon>
        <taxon>Sulfurimonadaceae</taxon>
        <taxon>Sulfurimonas</taxon>
    </lineage>
</organism>
<name>RL36_SULDN</name>
<reference key="1">
    <citation type="journal article" date="2008" name="Appl. Environ. Microbiol.">
        <title>Genome of the epsilonproteobacterial chemolithoautotroph Sulfurimonas denitrificans.</title>
        <authorList>
            <person name="Sievert S.M."/>
            <person name="Scott K.M."/>
            <person name="Klotz M.G."/>
            <person name="Chain P.S.G."/>
            <person name="Hauser L.J."/>
            <person name="Hemp J."/>
            <person name="Huegler M."/>
            <person name="Land M."/>
            <person name="Lapidus A."/>
            <person name="Larimer F.W."/>
            <person name="Lucas S."/>
            <person name="Malfatti S.A."/>
            <person name="Meyer F."/>
            <person name="Paulsen I.T."/>
            <person name="Ren Q."/>
            <person name="Simon J."/>
            <person name="Bailey K."/>
            <person name="Diaz E."/>
            <person name="Fitzpatrick K.A."/>
            <person name="Glover B."/>
            <person name="Gwatney N."/>
            <person name="Korajkic A."/>
            <person name="Long A."/>
            <person name="Mobberley J.M."/>
            <person name="Pantry S.N."/>
            <person name="Pazder G."/>
            <person name="Peterson S."/>
            <person name="Quintanilla J.D."/>
            <person name="Sprinkle R."/>
            <person name="Stephens J."/>
            <person name="Thomas P."/>
            <person name="Vaughn R."/>
            <person name="Weber M.J."/>
            <person name="Wooten L.L."/>
        </authorList>
    </citation>
    <scope>NUCLEOTIDE SEQUENCE [LARGE SCALE GENOMIC DNA]</scope>
    <source>
        <strain>ATCC 33889 / DSM 1251</strain>
    </source>
</reference>
<sequence length="37" mass="4312">MKVRASVKKMCDDCKVVKRKGIVRVICKVKKHKQRQG</sequence>
<evidence type="ECO:0000255" key="1">
    <source>
        <dbReference type="HAMAP-Rule" id="MF_00251"/>
    </source>
</evidence>
<evidence type="ECO:0000305" key="2"/>
<accession>Q30TS7</accession>
<proteinExistence type="inferred from homology"/>
<keyword id="KW-1185">Reference proteome</keyword>
<keyword id="KW-0687">Ribonucleoprotein</keyword>
<keyword id="KW-0689">Ribosomal protein</keyword>